<reference key="1">
    <citation type="journal article" date="1996" name="Science">
        <title>Complete genome sequence of the methanogenic archaeon, Methanococcus jannaschii.</title>
        <authorList>
            <person name="Bult C.J."/>
            <person name="White O."/>
            <person name="Olsen G.J."/>
            <person name="Zhou L."/>
            <person name="Fleischmann R.D."/>
            <person name="Sutton G.G."/>
            <person name="Blake J.A."/>
            <person name="FitzGerald L.M."/>
            <person name="Clayton R.A."/>
            <person name="Gocayne J.D."/>
            <person name="Kerlavage A.R."/>
            <person name="Dougherty B.A."/>
            <person name="Tomb J.-F."/>
            <person name="Adams M.D."/>
            <person name="Reich C.I."/>
            <person name="Overbeek R."/>
            <person name="Kirkness E.F."/>
            <person name="Weinstock K.G."/>
            <person name="Merrick J.M."/>
            <person name="Glodek A."/>
            <person name="Scott J.L."/>
            <person name="Geoghagen N.S.M."/>
            <person name="Weidman J.F."/>
            <person name="Fuhrmann J.L."/>
            <person name="Nguyen D."/>
            <person name="Utterback T.R."/>
            <person name="Kelley J.M."/>
            <person name="Peterson J.D."/>
            <person name="Sadow P.W."/>
            <person name="Hanna M.C."/>
            <person name="Cotton M.D."/>
            <person name="Roberts K.M."/>
            <person name="Hurst M.A."/>
            <person name="Kaine B.P."/>
            <person name="Borodovsky M."/>
            <person name="Klenk H.-P."/>
            <person name="Fraser C.M."/>
            <person name="Smith H.O."/>
            <person name="Woese C.R."/>
            <person name="Venter J.C."/>
        </authorList>
    </citation>
    <scope>NUCLEOTIDE SEQUENCE [LARGE SCALE GENOMIC DNA]</scope>
    <source>
        <strain>ATCC 43067 / DSM 2661 / JAL-1 / JCM 10045 / NBRC 100440</strain>
    </source>
</reference>
<reference key="2">
    <citation type="journal article" date="2003" name="Extremophiles">
        <title>Isolation of a complete A1AO ATP synthase comprising nine subunits from the hyperthermophile Methanococcus jannaschii.</title>
        <authorList>
            <person name="Lingl A."/>
            <person name="Huber H."/>
            <person name="Stetter K.O."/>
            <person name="Mayer F."/>
            <person name="Kellermann J."/>
            <person name="Mueller V."/>
        </authorList>
    </citation>
    <scope>PROTEIN SEQUENCE OF 1-6</scope>
    <scope>BIOPHYSICOCHEMICAL PROPERTIES</scope>
    <scope>SUBUNIT</scope>
    <scope>SUBCELLULAR LOCATION</scope>
    <scope>DOMAIN</scope>
    <source>
        <strain>ATCC 43067 / DSM 2661 / JAL-1 / JCM 10045 / NBRC 100440</strain>
    </source>
</reference>
<reference key="3">
    <citation type="journal article" date="2004" name="J. Biol. Chem.">
        <title>Structure and subunit arrangement of the A-type ATP synthase complex from the archaeon Methanococcus jannaschii visualized by electron microscopy.</title>
        <authorList>
            <person name="Coskun U."/>
            <person name="Chaban Y.L."/>
            <person name="Lingl A."/>
            <person name="Mueller V."/>
            <person name="Keegstra W."/>
            <person name="Boekema E.J."/>
            <person name="Grueber G."/>
        </authorList>
    </citation>
    <scope>STRUCTURE BY ELECTRON MICROSCOPY (18 ANGSTROMS) OF A-TYPE ATP SYNTHASE</scope>
    <scope>SUBUNIT</scope>
    <scope>SUBCELLULAR LOCATION</scope>
    <scope>DOMAIN</scope>
    <source>
        <strain>ATCC 43067 / DSM 2661 / JAL-1 / JCM 10045 / NBRC 100440</strain>
    </source>
</reference>
<dbReference type="EMBL" id="L77117">
    <property type="protein sequence ID" value="AAB98610.1"/>
    <property type="molecule type" value="Genomic_DNA"/>
</dbReference>
<dbReference type="PIR" id="G64376">
    <property type="entry name" value="G64376"/>
</dbReference>
<dbReference type="RefSeq" id="WP_010870120.1">
    <property type="nucleotide sequence ID" value="NC_000909.1"/>
</dbReference>
<dbReference type="SMR" id="Q58032"/>
<dbReference type="FunCoup" id="Q58032">
    <property type="interactions" value="117"/>
</dbReference>
<dbReference type="STRING" id="243232.MJ_0615"/>
<dbReference type="PaxDb" id="243232-MJ_0615"/>
<dbReference type="EnsemblBacteria" id="AAB98610">
    <property type="protein sequence ID" value="AAB98610"/>
    <property type="gene ID" value="MJ_0615"/>
</dbReference>
<dbReference type="GeneID" id="1451481"/>
<dbReference type="KEGG" id="mja:MJ_0615"/>
<dbReference type="eggNOG" id="arCOG04101">
    <property type="taxonomic scope" value="Archaea"/>
</dbReference>
<dbReference type="HOGENOM" id="CLU_069688_2_1_2"/>
<dbReference type="InParanoid" id="Q58032"/>
<dbReference type="OrthoDB" id="117390at2157"/>
<dbReference type="PhylomeDB" id="Q58032"/>
<dbReference type="Proteomes" id="UP000000805">
    <property type="component" value="Chromosome"/>
</dbReference>
<dbReference type="GO" id="GO:0005886">
    <property type="term" value="C:plasma membrane"/>
    <property type="evidence" value="ECO:0007669"/>
    <property type="project" value="UniProtKB-SubCell"/>
</dbReference>
<dbReference type="GO" id="GO:0033176">
    <property type="term" value="C:proton-transporting V-type ATPase complex"/>
    <property type="evidence" value="ECO:0000318"/>
    <property type="project" value="GO_Central"/>
</dbReference>
<dbReference type="GO" id="GO:0005524">
    <property type="term" value="F:ATP binding"/>
    <property type="evidence" value="ECO:0007669"/>
    <property type="project" value="UniProtKB-UniRule"/>
</dbReference>
<dbReference type="GO" id="GO:0046933">
    <property type="term" value="F:proton-transporting ATP synthase activity, rotational mechanism"/>
    <property type="evidence" value="ECO:0007669"/>
    <property type="project" value="UniProtKB-UniRule"/>
</dbReference>
<dbReference type="GO" id="GO:0046961">
    <property type="term" value="F:proton-transporting ATPase activity, rotational mechanism"/>
    <property type="evidence" value="ECO:0007669"/>
    <property type="project" value="InterPro"/>
</dbReference>
<dbReference type="GO" id="GO:0042777">
    <property type="term" value="P:proton motive force-driven plasma membrane ATP synthesis"/>
    <property type="evidence" value="ECO:0007669"/>
    <property type="project" value="UniProtKB-UniRule"/>
</dbReference>
<dbReference type="FunFam" id="1.10.287.3240:FF:000007">
    <property type="entry name" value="V-type ATP synthase subunit D"/>
    <property type="match status" value="1"/>
</dbReference>
<dbReference type="Gene3D" id="1.10.287.3240">
    <property type="match status" value="1"/>
</dbReference>
<dbReference type="HAMAP" id="MF_00271">
    <property type="entry name" value="ATP_synth_D_arch"/>
    <property type="match status" value="1"/>
</dbReference>
<dbReference type="InterPro" id="IPR002699">
    <property type="entry name" value="V_ATPase_D"/>
</dbReference>
<dbReference type="NCBIfam" id="NF001545">
    <property type="entry name" value="PRK00373.1-4"/>
    <property type="match status" value="1"/>
</dbReference>
<dbReference type="NCBIfam" id="TIGR00309">
    <property type="entry name" value="V_ATPase_subD"/>
    <property type="match status" value="1"/>
</dbReference>
<dbReference type="PANTHER" id="PTHR11671">
    <property type="entry name" value="V-TYPE ATP SYNTHASE SUBUNIT D"/>
    <property type="match status" value="1"/>
</dbReference>
<dbReference type="Pfam" id="PF01813">
    <property type="entry name" value="ATP-synt_D"/>
    <property type="match status" value="1"/>
</dbReference>
<name>AATD_METJA</name>
<evidence type="ECO:0000255" key="1">
    <source>
        <dbReference type="HAMAP-Rule" id="MF_00271"/>
    </source>
</evidence>
<evidence type="ECO:0000269" key="2">
    <source>
    </source>
</evidence>
<evidence type="ECO:0000269" key="3">
    <source>
    </source>
</evidence>
<evidence type="ECO:0000303" key="4">
    <source>
    </source>
</evidence>
<evidence type="ECO:0000303" key="5">
    <source>
    </source>
</evidence>
<evidence type="ECO:0000305" key="6">
    <source>
    </source>
</evidence>
<evidence type="ECO:0000305" key="7">
    <source>
    </source>
</evidence>
<proteinExistence type="evidence at protein level"/>
<comment type="function">
    <text evidence="1 6">Component of the A-type ATP synthase that produces ATP from ADP in the presence of a proton gradient across the membrane.</text>
</comment>
<comment type="biophysicochemical properties">
    <phDependence>
        <text evidence="2">Optimum pH is 6.0 for ATP hydrolysis.</text>
    </phDependence>
    <temperatureDependence>
        <text evidence="2">Optimum temperature is 80 degrees Celsius.</text>
    </temperatureDependence>
</comment>
<comment type="subunit">
    <text evidence="2 3">The A-type ATPase is composed of subunits A(3), B(3), C, D, E(1 or 2), F, H(2), I and K(x) (PubMed:12768457, PubMed:15220347).</text>
</comment>
<comment type="subcellular location">
    <subcellularLocation>
        <location evidence="1 2 3">Cell membrane</location>
        <topology evidence="1 2 3">Peripheral membrane protein</topology>
        <orientation evidence="6 7">Cytoplasmic side</orientation>
    </subcellularLocation>
</comment>
<comment type="domain">
    <text evidence="2 3">Purified ATP synthase is 25.9 nm long. The hydrophilic A1 domain is 9.4 X 11.5 nm, the central stalk is 8.0 X 3.9 nm and the membrane-bound A0 domain is 6.4 X 10.6 nm; the domains are connected by two stalks. ATP is synthesized or hydrolyzed by the A1 domain while ion translocation occurs via the A0 domain.</text>
</comment>
<comment type="similarity">
    <text evidence="1">Belongs to the V-ATPase D subunit family.</text>
</comment>
<organism>
    <name type="scientific">Methanocaldococcus jannaschii (strain ATCC 43067 / DSM 2661 / JAL-1 / JCM 10045 / NBRC 100440)</name>
    <name type="common">Methanococcus jannaschii</name>
    <dbReference type="NCBI Taxonomy" id="243232"/>
    <lineage>
        <taxon>Archaea</taxon>
        <taxon>Methanobacteriati</taxon>
        <taxon>Methanobacteriota</taxon>
        <taxon>Methanomada group</taxon>
        <taxon>Methanococci</taxon>
        <taxon>Methanococcales</taxon>
        <taxon>Methanocaldococcaceae</taxon>
        <taxon>Methanocaldococcus</taxon>
    </lineage>
</organism>
<feature type="chain" id="PRO_0000144250" description="A-type ATP synthase subunit D">
    <location>
        <begin position="1"/>
        <end position="216"/>
    </location>
</feature>
<keyword id="KW-0066">ATP synthesis</keyword>
<keyword id="KW-1003">Cell membrane</keyword>
<keyword id="KW-0903">Direct protein sequencing</keyword>
<keyword id="KW-0375">Hydrogen ion transport</keyword>
<keyword id="KW-0406">Ion transport</keyword>
<keyword id="KW-0472">Membrane</keyword>
<keyword id="KW-1185">Reference proteome</keyword>
<keyword id="KW-0813">Transport</keyword>
<accession>Q58032</accession>
<gene>
    <name evidence="1 5" type="primary">atpD</name>
    <name type="ordered locus">MJ0615</name>
</gene>
<protein>
    <recommendedName>
        <fullName evidence="1">A-type ATP synthase subunit D</fullName>
    </recommendedName>
    <alternativeName>
        <fullName evidence="4">A1A0-type ATP synthase subunit D</fullName>
    </alternativeName>
</protein>
<sequence length="216" mass="24951">MQRVNPTRMELLKLKNKIKLAEKGHKLLKQKRDALIMEFFQIIEQASDLRDKVEAKLAEAYKDLIMAQTVMGTLAVKEAALAAKNDKLEVDMDTKNIMGVTVPTFEIYNVRRKVGERGYSPYGVSSKLDEAAKKFEEALELITELAEIETSIKLLAEEIITTKRRVNALEYVIIPRLKSLKKYISMRLDEMERENFFRLKLIKSRIEKREAEGETV</sequence>